<proteinExistence type="inferred from homology"/>
<name>RSMA_BRUSI</name>
<protein>
    <recommendedName>
        <fullName evidence="1">Ribosomal RNA small subunit methyltransferase A</fullName>
        <ecNumber evidence="1">2.1.1.182</ecNumber>
    </recommendedName>
    <alternativeName>
        <fullName evidence="1">16S rRNA (adenine(1518)-N(6)/adenine(1519)-N(6))-dimethyltransferase</fullName>
    </alternativeName>
    <alternativeName>
        <fullName evidence="1">16S rRNA dimethyladenosine transferase</fullName>
    </alternativeName>
    <alternativeName>
        <fullName evidence="1">16S rRNA dimethylase</fullName>
    </alternativeName>
    <alternativeName>
        <fullName evidence="1">S-adenosylmethionine-6-N', N'-adenosyl(rRNA) dimethyltransferase</fullName>
    </alternativeName>
</protein>
<sequence length="276" mass="30292">MSIDSLPPLREVIERHDLMPKKSLGQNFLFDLNLTSKIARQAGDLRDQPVIEVGPGPGGLTRALLAQGAYVTAIERDDRCLEALAEIAAHYPGRLRIIAGDALEQDFTALFPEGPKPRIVANLPYNVGTQLLLNWLLVEPWPPFYSSMTLMFQREVAERIVAKPDSDHYGRLGVLAGWRTQAKIAFDVPPQAFTPPPKVMSSVVHIVPRETPLPCRAEALGQITQAAFGQRRKMLRQSLKSIGGGALLEKTGIDGTRRAETLSVEEFVALANACLP</sequence>
<reference key="1">
    <citation type="submission" date="2007-12" db="EMBL/GenBank/DDBJ databases">
        <title>Brucella suis ATCC 23445 whole genome shotgun sequencing project.</title>
        <authorList>
            <person name="Setubal J.C."/>
            <person name="Bowns C."/>
            <person name="Boyle S."/>
            <person name="Crasta O.R."/>
            <person name="Czar M.J."/>
            <person name="Dharmanolla C."/>
            <person name="Gillespie J.J."/>
            <person name="Kenyon R.W."/>
            <person name="Lu J."/>
            <person name="Mane S."/>
            <person name="Mohapatra S."/>
            <person name="Nagrani S."/>
            <person name="Purkayastha A."/>
            <person name="Rajasimha H.K."/>
            <person name="Shallom J.M."/>
            <person name="Shallom S."/>
            <person name="Shukla M."/>
            <person name="Snyder E.E."/>
            <person name="Sobral B.W."/>
            <person name="Wattam A.R."/>
            <person name="Will R."/>
            <person name="Williams K."/>
            <person name="Yoo H."/>
            <person name="Bruce D."/>
            <person name="Detter C."/>
            <person name="Munk C."/>
            <person name="Brettin T.S."/>
        </authorList>
    </citation>
    <scope>NUCLEOTIDE SEQUENCE [LARGE SCALE GENOMIC DNA]</scope>
    <source>
        <strain>ATCC 23445 / NCTC 10510</strain>
    </source>
</reference>
<gene>
    <name evidence="1" type="primary">rsmA</name>
    <name evidence="1" type="synonym">ksgA</name>
    <name type="ordered locus">BSUIS_A0710</name>
</gene>
<keyword id="KW-0963">Cytoplasm</keyword>
<keyword id="KW-0489">Methyltransferase</keyword>
<keyword id="KW-0694">RNA-binding</keyword>
<keyword id="KW-0698">rRNA processing</keyword>
<keyword id="KW-0949">S-adenosyl-L-methionine</keyword>
<keyword id="KW-0808">Transferase</keyword>
<feature type="chain" id="PRO_1000082547" description="Ribosomal RNA small subunit methyltransferase A">
    <location>
        <begin position="1"/>
        <end position="276"/>
    </location>
</feature>
<feature type="binding site" evidence="1">
    <location>
        <position position="27"/>
    </location>
    <ligand>
        <name>S-adenosyl-L-methionine</name>
        <dbReference type="ChEBI" id="CHEBI:59789"/>
    </ligand>
</feature>
<feature type="binding site" evidence="1">
    <location>
        <position position="29"/>
    </location>
    <ligand>
        <name>S-adenosyl-L-methionine</name>
        <dbReference type="ChEBI" id="CHEBI:59789"/>
    </ligand>
</feature>
<feature type="binding site" evidence="1">
    <location>
        <position position="54"/>
    </location>
    <ligand>
        <name>S-adenosyl-L-methionine</name>
        <dbReference type="ChEBI" id="CHEBI:59789"/>
    </ligand>
</feature>
<feature type="binding site" evidence="1">
    <location>
        <position position="75"/>
    </location>
    <ligand>
        <name>S-adenosyl-L-methionine</name>
        <dbReference type="ChEBI" id="CHEBI:59789"/>
    </ligand>
</feature>
<feature type="binding site" evidence="1">
    <location>
        <position position="101"/>
    </location>
    <ligand>
        <name>S-adenosyl-L-methionine</name>
        <dbReference type="ChEBI" id="CHEBI:59789"/>
    </ligand>
</feature>
<feature type="binding site" evidence="1">
    <location>
        <position position="122"/>
    </location>
    <ligand>
        <name>S-adenosyl-L-methionine</name>
        <dbReference type="ChEBI" id="CHEBI:59789"/>
    </ligand>
</feature>
<evidence type="ECO:0000255" key="1">
    <source>
        <dbReference type="HAMAP-Rule" id="MF_00607"/>
    </source>
</evidence>
<organism>
    <name type="scientific">Brucella suis (strain ATCC 23445 / NCTC 10510)</name>
    <dbReference type="NCBI Taxonomy" id="470137"/>
    <lineage>
        <taxon>Bacteria</taxon>
        <taxon>Pseudomonadati</taxon>
        <taxon>Pseudomonadota</taxon>
        <taxon>Alphaproteobacteria</taxon>
        <taxon>Hyphomicrobiales</taxon>
        <taxon>Brucellaceae</taxon>
        <taxon>Brucella/Ochrobactrum group</taxon>
        <taxon>Brucella</taxon>
    </lineage>
</organism>
<accession>B0CL06</accession>
<dbReference type="EC" id="2.1.1.182" evidence="1"/>
<dbReference type="EMBL" id="CP000911">
    <property type="protein sequence ID" value="ABY37786.1"/>
    <property type="molecule type" value="Genomic_DNA"/>
</dbReference>
<dbReference type="RefSeq" id="WP_006198523.1">
    <property type="nucleotide sequence ID" value="NC_010169.1"/>
</dbReference>
<dbReference type="SMR" id="B0CL06"/>
<dbReference type="KEGG" id="bmt:BSUIS_A0710"/>
<dbReference type="HOGENOM" id="CLU_041220_0_1_5"/>
<dbReference type="Proteomes" id="UP000008545">
    <property type="component" value="Chromosome I"/>
</dbReference>
<dbReference type="GO" id="GO:0005829">
    <property type="term" value="C:cytosol"/>
    <property type="evidence" value="ECO:0007669"/>
    <property type="project" value="TreeGrafter"/>
</dbReference>
<dbReference type="GO" id="GO:0052908">
    <property type="term" value="F:16S rRNA (adenine(1518)-N(6)/adenine(1519)-N(6))-dimethyltransferase activity"/>
    <property type="evidence" value="ECO:0007669"/>
    <property type="project" value="UniProtKB-EC"/>
</dbReference>
<dbReference type="GO" id="GO:0003723">
    <property type="term" value="F:RNA binding"/>
    <property type="evidence" value="ECO:0007669"/>
    <property type="project" value="UniProtKB-KW"/>
</dbReference>
<dbReference type="CDD" id="cd02440">
    <property type="entry name" value="AdoMet_MTases"/>
    <property type="match status" value="1"/>
</dbReference>
<dbReference type="FunFam" id="1.10.8.100:FF:000001">
    <property type="entry name" value="Ribosomal RNA small subunit methyltransferase A"/>
    <property type="match status" value="1"/>
</dbReference>
<dbReference type="Gene3D" id="1.10.8.100">
    <property type="entry name" value="Ribosomal RNA adenine dimethylase-like, domain 2"/>
    <property type="match status" value="1"/>
</dbReference>
<dbReference type="Gene3D" id="3.40.50.150">
    <property type="entry name" value="Vaccinia Virus protein VP39"/>
    <property type="match status" value="1"/>
</dbReference>
<dbReference type="HAMAP" id="MF_00607">
    <property type="entry name" value="16SrRNA_methyltr_A"/>
    <property type="match status" value="1"/>
</dbReference>
<dbReference type="InterPro" id="IPR001737">
    <property type="entry name" value="KsgA/Erm"/>
</dbReference>
<dbReference type="InterPro" id="IPR023165">
    <property type="entry name" value="rRNA_Ade_diMease-like_C"/>
</dbReference>
<dbReference type="InterPro" id="IPR020596">
    <property type="entry name" value="rRNA_Ade_Mease_Trfase_CS"/>
</dbReference>
<dbReference type="InterPro" id="IPR020598">
    <property type="entry name" value="rRNA_Ade_methylase_Trfase_N"/>
</dbReference>
<dbReference type="InterPro" id="IPR011530">
    <property type="entry name" value="rRNA_adenine_dimethylase"/>
</dbReference>
<dbReference type="InterPro" id="IPR029063">
    <property type="entry name" value="SAM-dependent_MTases_sf"/>
</dbReference>
<dbReference type="NCBIfam" id="TIGR00755">
    <property type="entry name" value="ksgA"/>
    <property type="match status" value="1"/>
</dbReference>
<dbReference type="PANTHER" id="PTHR11727">
    <property type="entry name" value="DIMETHYLADENOSINE TRANSFERASE"/>
    <property type="match status" value="1"/>
</dbReference>
<dbReference type="PANTHER" id="PTHR11727:SF7">
    <property type="entry name" value="DIMETHYLADENOSINE TRANSFERASE-RELATED"/>
    <property type="match status" value="1"/>
</dbReference>
<dbReference type="Pfam" id="PF00398">
    <property type="entry name" value="RrnaAD"/>
    <property type="match status" value="1"/>
</dbReference>
<dbReference type="SMART" id="SM00650">
    <property type="entry name" value="rADc"/>
    <property type="match status" value="1"/>
</dbReference>
<dbReference type="SUPFAM" id="SSF53335">
    <property type="entry name" value="S-adenosyl-L-methionine-dependent methyltransferases"/>
    <property type="match status" value="1"/>
</dbReference>
<dbReference type="PROSITE" id="PS01131">
    <property type="entry name" value="RRNA_A_DIMETH"/>
    <property type="match status" value="1"/>
</dbReference>
<dbReference type="PROSITE" id="PS51689">
    <property type="entry name" value="SAM_RNA_A_N6_MT"/>
    <property type="match status" value="1"/>
</dbReference>
<comment type="function">
    <text evidence="1">Specifically dimethylates two adjacent adenosines (A1518 and A1519) in the loop of a conserved hairpin near the 3'-end of 16S rRNA in the 30S particle. May play a critical role in biogenesis of 30S subunits.</text>
</comment>
<comment type="catalytic activity">
    <reaction evidence="1">
        <text>adenosine(1518)/adenosine(1519) in 16S rRNA + 4 S-adenosyl-L-methionine = N(6)-dimethyladenosine(1518)/N(6)-dimethyladenosine(1519) in 16S rRNA + 4 S-adenosyl-L-homocysteine + 4 H(+)</text>
        <dbReference type="Rhea" id="RHEA:19609"/>
        <dbReference type="Rhea" id="RHEA-COMP:10232"/>
        <dbReference type="Rhea" id="RHEA-COMP:10233"/>
        <dbReference type="ChEBI" id="CHEBI:15378"/>
        <dbReference type="ChEBI" id="CHEBI:57856"/>
        <dbReference type="ChEBI" id="CHEBI:59789"/>
        <dbReference type="ChEBI" id="CHEBI:74411"/>
        <dbReference type="ChEBI" id="CHEBI:74493"/>
        <dbReference type="EC" id="2.1.1.182"/>
    </reaction>
</comment>
<comment type="subcellular location">
    <subcellularLocation>
        <location evidence="1">Cytoplasm</location>
    </subcellularLocation>
</comment>
<comment type="similarity">
    <text evidence="1">Belongs to the class I-like SAM-binding methyltransferase superfamily. rRNA adenine N(6)-methyltransferase family. RsmA subfamily.</text>
</comment>